<accession>Q8Y6Q5</accession>
<feature type="chain" id="PRO_0000154365" description="N-(5'-phosphoribosyl)anthranilate isomerase">
    <location>
        <begin position="1"/>
        <end position="202"/>
    </location>
</feature>
<organism>
    <name type="scientific">Listeria monocytogenes serovar 1/2a (strain ATCC BAA-679 / EGD-e)</name>
    <dbReference type="NCBI Taxonomy" id="169963"/>
    <lineage>
        <taxon>Bacteria</taxon>
        <taxon>Bacillati</taxon>
        <taxon>Bacillota</taxon>
        <taxon>Bacilli</taxon>
        <taxon>Bacillales</taxon>
        <taxon>Listeriaceae</taxon>
        <taxon>Listeria</taxon>
    </lineage>
</organism>
<name>TRPF_LISMO</name>
<proteinExistence type="inferred from homology"/>
<comment type="catalytic activity">
    <reaction evidence="1">
        <text>N-(5-phospho-beta-D-ribosyl)anthranilate = 1-(2-carboxyphenylamino)-1-deoxy-D-ribulose 5-phosphate</text>
        <dbReference type="Rhea" id="RHEA:21540"/>
        <dbReference type="ChEBI" id="CHEBI:18277"/>
        <dbReference type="ChEBI" id="CHEBI:58613"/>
        <dbReference type="EC" id="5.3.1.24"/>
    </reaction>
</comment>
<comment type="pathway">
    <text evidence="1">Amino-acid biosynthesis; L-tryptophan biosynthesis; L-tryptophan from chorismate: step 3/5.</text>
</comment>
<comment type="similarity">
    <text evidence="1">Belongs to the TrpF family.</text>
</comment>
<evidence type="ECO:0000255" key="1">
    <source>
        <dbReference type="HAMAP-Rule" id="MF_00135"/>
    </source>
</evidence>
<gene>
    <name evidence="1" type="primary">trpF</name>
    <name type="ordered locus">lmo1629</name>
</gene>
<keyword id="KW-0028">Amino-acid biosynthesis</keyword>
<keyword id="KW-0057">Aromatic amino acid biosynthesis</keyword>
<keyword id="KW-0413">Isomerase</keyword>
<keyword id="KW-1185">Reference proteome</keyword>
<keyword id="KW-0822">Tryptophan biosynthesis</keyword>
<sequence>MIVKICGLKKAVDVAAAVENGADMIGFVFAKSKRQVTVDEAHELAKNIPAGVKKVGVFVNPTEEELTAAIKGVPLDIVQLHGQEPAEQANRTDAEVIKAFPVKDGKLPDNINDYPNAYILLDAPAEEYEGGSGKTFDWDKIDRDLLTKNKLIIAGGLNAQNVQEAIKRFEPYAVDISSGVETNGEKDPQKIKCFIKTAKGVE</sequence>
<dbReference type="EC" id="5.3.1.24" evidence="1"/>
<dbReference type="EMBL" id="AL591980">
    <property type="protein sequence ID" value="CAC99707.1"/>
    <property type="molecule type" value="Genomic_DNA"/>
</dbReference>
<dbReference type="PIR" id="AE1278">
    <property type="entry name" value="AE1278"/>
</dbReference>
<dbReference type="RefSeq" id="NP_465154.1">
    <property type="nucleotide sequence ID" value="NC_003210.1"/>
</dbReference>
<dbReference type="RefSeq" id="WP_003723935.1">
    <property type="nucleotide sequence ID" value="NZ_CP149495.1"/>
</dbReference>
<dbReference type="SMR" id="Q8Y6Q5"/>
<dbReference type="STRING" id="169963.gene:17594286"/>
<dbReference type="PaxDb" id="169963-lmo1629"/>
<dbReference type="EnsemblBacteria" id="CAC99707">
    <property type="protein sequence ID" value="CAC99707"/>
    <property type="gene ID" value="CAC99707"/>
</dbReference>
<dbReference type="GeneID" id="985716"/>
<dbReference type="KEGG" id="lmo:lmo1629"/>
<dbReference type="PATRIC" id="fig|169963.11.peg.1672"/>
<dbReference type="eggNOG" id="COG0135">
    <property type="taxonomic scope" value="Bacteria"/>
</dbReference>
<dbReference type="HOGENOM" id="CLU_076364_1_0_9"/>
<dbReference type="OrthoDB" id="9786954at2"/>
<dbReference type="PhylomeDB" id="Q8Y6Q5"/>
<dbReference type="BioCyc" id="LMON169963:LMO1629-MONOMER"/>
<dbReference type="UniPathway" id="UPA00035">
    <property type="reaction ID" value="UER00042"/>
</dbReference>
<dbReference type="Proteomes" id="UP000000817">
    <property type="component" value="Chromosome"/>
</dbReference>
<dbReference type="GO" id="GO:0004640">
    <property type="term" value="F:phosphoribosylanthranilate isomerase activity"/>
    <property type="evidence" value="ECO:0000318"/>
    <property type="project" value="GO_Central"/>
</dbReference>
<dbReference type="GO" id="GO:0000162">
    <property type="term" value="P:L-tryptophan biosynthetic process"/>
    <property type="evidence" value="ECO:0000318"/>
    <property type="project" value="GO_Central"/>
</dbReference>
<dbReference type="CDD" id="cd00405">
    <property type="entry name" value="PRAI"/>
    <property type="match status" value="1"/>
</dbReference>
<dbReference type="FunFam" id="3.20.20.70:FF:000075">
    <property type="entry name" value="Tryptophan biosynthesis protein TRP1"/>
    <property type="match status" value="1"/>
</dbReference>
<dbReference type="Gene3D" id="3.20.20.70">
    <property type="entry name" value="Aldolase class I"/>
    <property type="match status" value="1"/>
</dbReference>
<dbReference type="HAMAP" id="MF_00135">
    <property type="entry name" value="PRAI"/>
    <property type="match status" value="1"/>
</dbReference>
<dbReference type="InterPro" id="IPR013785">
    <property type="entry name" value="Aldolase_TIM"/>
</dbReference>
<dbReference type="InterPro" id="IPR001240">
    <property type="entry name" value="PRAI_dom"/>
</dbReference>
<dbReference type="InterPro" id="IPR011060">
    <property type="entry name" value="RibuloseP-bd_barrel"/>
</dbReference>
<dbReference type="InterPro" id="IPR044643">
    <property type="entry name" value="TrpF_fam"/>
</dbReference>
<dbReference type="NCBIfam" id="NF002300">
    <property type="entry name" value="PRK01222.1-7"/>
    <property type="match status" value="1"/>
</dbReference>
<dbReference type="PANTHER" id="PTHR42894">
    <property type="entry name" value="N-(5'-PHOSPHORIBOSYL)ANTHRANILATE ISOMERASE"/>
    <property type="match status" value="1"/>
</dbReference>
<dbReference type="PANTHER" id="PTHR42894:SF1">
    <property type="entry name" value="N-(5'-PHOSPHORIBOSYL)ANTHRANILATE ISOMERASE"/>
    <property type="match status" value="1"/>
</dbReference>
<dbReference type="Pfam" id="PF00697">
    <property type="entry name" value="PRAI"/>
    <property type="match status" value="1"/>
</dbReference>
<dbReference type="SUPFAM" id="SSF51366">
    <property type="entry name" value="Ribulose-phoshate binding barrel"/>
    <property type="match status" value="1"/>
</dbReference>
<protein>
    <recommendedName>
        <fullName evidence="1">N-(5'-phosphoribosyl)anthranilate isomerase</fullName>
        <shortName evidence="1">PRAI</shortName>
        <ecNumber evidence="1">5.3.1.24</ecNumber>
    </recommendedName>
</protein>
<reference key="1">
    <citation type="journal article" date="2001" name="Science">
        <title>Comparative genomics of Listeria species.</title>
        <authorList>
            <person name="Glaser P."/>
            <person name="Frangeul L."/>
            <person name="Buchrieser C."/>
            <person name="Rusniok C."/>
            <person name="Amend A."/>
            <person name="Baquero F."/>
            <person name="Berche P."/>
            <person name="Bloecker H."/>
            <person name="Brandt P."/>
            <person name="Chakraborty T."/>
            <person name="Charbit A."/>
            <person name="Chetouani F."/>
            <person name="Couve E."/>
            <person name="de Daruvar A."/>
            <person name="Dehoux P."/>
            <person name="Domann E."/>
            <person name="Dominguez-Bernal G."/>
            <person name="Duchaud E."/>
            <person name="Durant L."/>
            <person name="Dussurget O."/>
            <person name="Entian K.-D."/>
            <person name="Fsihi H."/>
            <person name="Garcia-del Portillo F."/>
            <person name="Garrido P."/>
            <person name="Gautier L."/>
            <person name="Goebel W."/>
            <person name="Gomez-Lopez N."/>
            <person name="Hain T."/>
            <person name="Hauf J."/>
            <person name="Jackson D."/>
            <person name="Jones L.-M."/>
            <person name="Kaerst U."/>
            <person name="Kreft J."/>
            <person name="Kuhn M."/>
            <person name="Kunst F."/>
            <person name="Kurapkat G."/>
            <person name="Madueno E."/>
            <person name="Maitournam A."/>
            <person name="Mata Vicente J."/>
            <person name="Ng E."/>
            <person name="Nedjari H."/>
            <person name="Nordsiek G."/>
            <person name="Novella S."/>
            <person name="de Pablos B."/>
            <person name="Perez-Diaz J.-C."/>
            <person name="Purcell R."/>
            <person name="Remmel B."/>
            <person name="Rose M."/>
            <person name="Schlueter T."/>
            <person name="Simoes N."/>
            <person name="Tierrez A."/>
            <person name="Vazquez-Boland J.-A."/>
            <person name="Voss H."/>
            <person name="Wehland J."/>
            <person name="Cossart P."/>
        </authorList>
    </citation>
    <scope>NUCLEOTIDE SEQUENCE [LARGE SCALE GENOMIC DNA]</scope>
    <source>
        <strain>ATCC BAA-679 / EGD-e</strain>
    </source>
</reference>